<comment type="function">
    <text evidence="1">Catalyzes the conversion of 1-hydroxy-2-methyl-2-(E)-butenyl 4-diphosphate (HMBPP) into a mixture of isopentenyl diphosphate (IPP) and dimethylallyl diphosphate (DMAPP). Acts in the terminal step of the DOXP/MEP pathway for isoprenoid precursor biosynthesis.</text>
</comment>
<comment type="catalytic activity">
    <reaction evidence="1">
        <text>isopentenyl diphosphate + 2 oxidized [2Fe-2S]-[ferredoxin] + H2O = (2E)-4-hydroxy-3-methylbut-2-enyl diphosphate + 2 reduced [2Fe-2S]-[ferredoxin] + 2 H(+)</text>
        <dbReference type="Rhea" id="RHEA:24488"/>
        <dbReference type="Rhea" id="RHEA-COMP:10000"/>
        <dbReference type="Rhea" id="RHEA-COMP:10001"/>
        <dbReference type="ChEBI" id="CHEBI:15377"/>
        <dbReference type="ChEBI" id="CHEBI:15378"/>
        <dbReference type="ChEBI" id="CHEBI:33737"/>
        <dbReference type="ChEBI" id="CHEBI:33738"/>
        <dbReference type="ChEBI" id="CHEBI:128753"/>
        <dbReference type="ChEBI" id="CHEBI:128769"/>
        <dbReference type="EC" id="1.17.7.4"/>
    </reaction>
</comment>
<comment type="catalytic activity">
    <reaction evidence="1">
        <text>dimethylallyl diphosphate + 2 oxidized [2Fe-2S]-[ferredoxin] + H2O = (2E)-4-hydroxy-3-methylbut-2-enyl diphosphate + 2 reduced [2Fe-2S]-[ferredoxin] + 2 H(+)</text>
        <dbReference type="Rhea" id="RHEA:24825"/>
        <dbReference type="Rhea" id="RHEA-COMP:10000"/>
        <dbReference type="Rhea" id="RHEA-COMP:10001"/>
        <dbReference type="ChEBI" id="CHEBI:15377"/>
        <dbReference type="ChEBI" id="CHEBI:15378"/>
        <dbReference type="ChEBI" id="CHEBI:33737"/>
        <dbReference type="ChEBI" id="CHEBI:33738"/>
        <dbReference type="ChEBI" id="CHEBI:57623"/>
        <dbReference type="ChEBI" id="CHEBI:128753"/>
        <dbReference type="EC" id="1.17.7.4"/>
    </reaction>
</comment>
<comment type="cofactor">
    <cofactor evidence="1">
        <name>[4Fe-4S] cluster</name>
        <dbReference type="ChEBI" id="CHEBI:49883"/>
    </cofactor>
    <text evidence="1">Binds 1 [4Fe-4S] cluster per subunit.</text>
</comment>
<comment type="pathway">
    <text evidence="1">Isoprenoid biosynthesis; dimethylallyl diphosphate biosynthesis; dimethylallyl diphosphate from (2E)-4-hydroxy-3-methylbutenyl diphosphate: step 1/1.</text>
</comment>
<comment type="pathway">
    <text evidence="1">Isoprenoid biosynthesis; isopentenyl diphosphate biosynthesis via DXP pathway; isopentenyl diphosphate from 1-deoxy-D-xylulose 5-phosphate: step 6/6.</text>
</comment>
<comment type="similarity">
    <text evidence="1">Belongs to the IspH family.</text>
</comment>
<comment type="sequence caution" evidence="2">
    <conflict type="erroneous initiation">
        <sequence resource="EMBL-CDS" id="AAX73888"/>
    </conflict>
</comment>
<accession>Q57EP6</accession>
<protein>
    <recommendedName>
        <fullName evidence="1">4-hydroxy-3-methylbut-2-enyl diphosphate reductase</fullName>
        <shortName evidence="1">HMBPP reductase</shortName>
        <ecNumber evidence="1">1.17.7.4</ecNumber>
    </recommendedName>
</protein>
<evidence type="ECO:0000255" key="1">
    <source>
        <dbReference type="HAMAP-Rule" id="MF_00191"/>
    </source>
</evidence>
<evidence type="ECO:0000305" key="2"/>
<proteinExistence type="inferred from homology"/>
<reference key="1">
    <citation type="journal article" date="2005" name="J. Bacteriol.">
        <title>Completion of the genome sequence of Brucella abortus and comparison to the highly similar genomes of Brucella melitensis and Brucella suis.</title>
        <authorList>
            <person name="Halling S.M."/>
            <person name="Peterson-Burch B.D."/>
            <person name="Bricker B.J."/>
            <person name="Zuerner R.L."/>
            <person name="Qing Z."/>
            <person name="Li L.-L."/>
            <person name="Kapur V."/>
            <person name="Alt D.P."/>
            <person name="Olsen S.C."/>
        </authorList>
    </citation>
    <scope>NUCLEOTIDE SEQUENCE [LARGE SCALE GENOMIC DNA]</scope>
    <source>
        <strain>9-941</strain>
    </source>
</reference>
<keyword id="KW-0004">4Fe-4S</keyword>
<keyword id="KW-0408">Iron</keyword>
<keyword id="KW-0411">Iron-sulfur</keyword>
<keyword id="KW-0414">Isoprene biosynthesis</keyword>
<keyword id="KW-0479">Metal-binding</keyword>
<keyword id="KW-0560">Oxidoreductase</keyword>
<organism>
    <name type="scientific">Brucella abortus biovar 1 (strain 9-941)</name>
    <dbReference type="NCBI Taxonomy" id="262698"/>
    <lineage>
        <taxon>Bacteria</taxon>
        <taxon>Pseudomonadati</taxon>
        <taxon>Pseudomonadota</taxon>
        <taxon>Alphaproteobacteria</taxon>
        <taxon>Hyphomicrobiales</taxon>
        <taxon>Brucellaceae</taxon>
        <taxon>Brucella/Ochrobactrum group</taxon>
        <taxon>Brucella</taxon>
    </lineage>
</organism>
<dbReference type="EC" id="1.17.7.4" evidence="1"/>
<dbReference type="EMBL" id="AE017223">
    <property type="protein sequence ID" value="AAX73888.1"/>
    <property type="status" value="ALT_INIT"/>
    <property type="molecule type" value="Genomic_DNA"/>
</dbReference>
<dbReference type="RefSeq" id="WP_002963633.1">
    <property type="nucleotide sequence ID" value="NC_006932.1"/>
</dbReference>
<dbReference type="SMR" id="Q57EP6"/>
<dbReference type="EnsemblBacteria" id="AAX73888">
    <property type="protein sequence ID" value="AAX73888"/>
    <property type="gene ID" value="BruAb1_0497"/>
</dbReference>
<dbReference type="GeneID" id="97534156"/>
<dbReference type="KEGG" id="bmb:BruAb1_0497"/>
<dbReference type="HOGENOM" id="CLU_027486_1_0_5"/>
<dbReference type="UniPathway" id="UPA00056">
    <property type="reaction ID" value="UER00097"/>
</dbReference>
<dbReference type="UniPathway" id="UPA00059">
    <property type="reaction ID" value="UER00105"/>
</dbReference>
<dbReference type="Proteomes" id="UP000000540">
    <property type="component" value="Chromosome I"/>
</dbReference>
<dbReference type="GO" id="GO:0051539">
    <property type="term" value="F:4 iron, 4 sulfur cluster binding"/>
    <property type="evidence" value="ECO:0007669"/>
    <property type="project" value="UniProtKB-UniRule"/>
</dbReference>
<dbReference type="GO" id="GO:0051745">
    <property type="term" value="F:4-hydroxy-3-methylbut-2-enyl diphosphate reductase activity"/>
    <property type="evidence" value="ECO:0007669"/>
    <property type="project" value="UniProtKB-UniRule"/>
</dbReference>
<dbReference type="GO" id="GO:0046872">
    <property type="term" value="F:metal ion binding"/>
    <property type="evidence" value="ECO:0007669"/>
    <property type="project" value="UniProtKB-KW"/>
</dbReference>
<dbReference type="GO" id="GO:0050992">
    <property type="term" value="P:dimethylallyl diphosphate biosynthetic process"/>
    <property type="evidence" value="ECO:0007669"/>
    <property type="project" value="UniProtKB-UniRule"/>
</dbReference>
<dbReference type="GO" id="GO:0019288">
    <property type="term" value="P:isopentenyl diphosphate biosynthetic process, methylerythritol 4-phosphate pathway"/>
    <property type="evidence" value="ECO:0007669"/>
    <property type="project" value="UniProtKB-UniRule"/>
</dbReference>
<dbReference type="GO" id="GO:0016114">
    <property type="term" value="P:terpenoid biosynthetic process"/>
    <property type="evidence" value="ECO:0007669"/>
    <property type="project" value="UniProtKB-UniRule"/>
</dbReference>
<dbReference type="CDD" id="cd13944">
    <property type="entry name" value="lytB_ispH"/>
    <property type="match status" value="1"/>
</dbReference>
<dbReference type="Gene3D" id="3.40.50.11270">
    <property type="match status" value="1"/>
</dbReference>
<dbReference type="Gene3D" id="3.40.1010.20">
    <property type="entry name" value="4-hydroxy-3-methylbut-2-enyl diphosphate reductase, catalytic domain"/>
    <property type="match status" value="2"/>
</dbReference>
<dbReference type="HAMAP" id="MF_00191">
    <property type="entry name" value="IspH"/>
    <property type="match status" value="1"/>
</dbReference>
<dbReference type="InterPro" id="IPR003451">
    <property type="entry name" value="LytB/IspH"/>
</dbReference>
<dbReference type="NCBIfam" id="TIGR00216">
    <property type="entry name" value="ispH_lytB"/>
    <property type="match status" value="1"/>
</dbReference>
<dbReference type="NCBIfam" id="NF002190">
    <property type="entry name" value="PRK01045.1-4"/>
    <property type="match status" value="1"/>
</dbReference>
<dbReference type="PANTHER" id="PTHR30426">
    <property type="entry name" value="4-HYDROXY-3-METHYLBUT-2-ENYL DIPHOSPHATE REDUCTASE"/>
    <property type="match status" value="1"/>
</dbReference>
<dbReference type="PANTHER" id="PTHR30426:SF0">
    <property type="entry name" value="4-HYDROXY-3-METHYLBUT-2-ENYL DIPHOSPHATE REDUCTASE"/>
    <property type="match status" value="1"/>
</dbReference>
<dbReference type="Pfam" id="PF02401">
    <property type="entry name" value="LYTB"/>
    <property type="match status" value="1"/>
</dbReference>
<feature type="chain" id="PRO_0000128786" description="4-hydroxy-3-methylbut-2-enyl diphosphate reductase">
    <location>
        <begin position="1"/>
        <end position="346"/>
    </location>
</feature>
<feature type="active site" description="Proton donor" evidence="1">
    <location>
        <position position="136"/>
    </location>
</feature>
<feature type="binding site" evidence="1">
    <location>
        <position position="19"/>
    </location>
    <ligand>
        <name>[4Fe-4S] cluster</name>
        <dbReference type="ChEBI" id="CHEBI:49883"/>
    </ligand>
</feature>
<feature type="binding site" evidence="1">
    <location>
        <position position="48"/>
    </location>
    <ligand>
        <name>(2E)-4-hydroxy-3-methylbut-2-enyl diphosphate</name>
        <dbReference type="ChEBI" id="CHEBI:128753"/>
    </ligand>
</feature>
<feature type="binding site" evidence="1">
    <location>
        <position position="48"/>
    </location>
    <ligand>
        <name>dimethylallyl diphosphate</name>
        <dbReference type="ChEBI" id="CHEBI:57623"/>
    </ligand>
</feature>
<feature type="binding site" evidence="1">
    <location>
        <position position="48"/>
    </location>
    <ligand>
        <name>isopentenyl diphosphate</name>
        <dbReference type="ChEBI" id="CHEBI:128769"/>
    </ligand>
</feature>
<feature type="binding site" evidence="1">
    <location>
        <position position="84"/>
    </location>
    <ligand>
        <name>(2E)-4-hydroxy-3-methylbut-2-enyl diphosphate</name>
        <dbReference type="ChEBI" id="CHEBI:128753"/>
    </ligand>
</feature>
<feature type="binding site" evidence="1">
    <location>
        <position position="84"/>
    </location>
    <ligand>
        <name>dimethylallyl diphosphate</name>
        <dbReference type="ChEBI" id="CHEBI:57623"/>
    </ligand>
</feature>
<feature type="binding site" evidence="1">
    <location>
        <position position="84"/>
    </location>
    <ligand>
        <name>isopentenyl diphosphate</name>
        <dbReference type="ChEBI" id="CHEBI:128769"/>
    </ligand>
</feature>
<feature type="binding site" evidence="1">
    <location>
        <position position="106"/>
    </location>
    <ligand>
        <name>[4Fe-4S] cluster</name>
        <dbReference type="ChEBI" id="CHEBI:49883"/>
    </ligand>
</feature>
<feature type="binding site" evidence="1">
    <location>
        <position position="134"/>
    </location>
    <ligand>
        <name>(2E)-4-hydroxy-3-methylbut-2-enyl diphosphate</name>
        <dbReference type="ChEBI" id="CHEBI:128753"/>
    </ligand>
</feature>
<feature type="binding site" evidence="1">
    <location>
        <position position="134"/>
    </location>
    <ligand>
        <name>dimethylallyl diphosphate</name>
        <dbReference type="ChEBI" id="CHEBI:57623"/>
    </ligand>
</feature>
<feature type="binding site" evidence="1">
    <location>
        <position position="134"/>
    </location>
    <ligand>
        <name>isopentenyl diphosphate</name>
        <dbReference type="ChEBI" id="CHEBI:128769"/>
    </ligand>
</feature>
<feature type="binding site" evidence="1">
    <location>
        <position position="175"/>
    </location>
    <ligand>
        <name>(2E)-4-hydroxy-3-methylbut-2-enyl diphosphate</name>
        <dbReference type="ChEBI" id="CHEBI:128753"/>
    </ligand>
</feature>
<feature type="binding site" evidence="1">
    <location>
        <position position="205"/>
    </location>
    <ligand>
        <name>[4Fe-4S] cluster</name>
        <dbReference type="ChEBI" id="CHEBI:49883"/>
    </ligand>
</feature>
<feature type="binding site" evidence="1">
    <location>
        <position position="233"/>
    </location>
    <ligand>
        <name>(2E)-4-hydroxy-3-methylbut-2-enyl diphosphate</name>
        <dbReference type="ChEBI" id="CHEBI:128753"/>
    </ligand>
</feature>
<feature type="binding site" evidence="1">
    <location>
        <position position="233"/>
    </location>
    <ligand>
        <name>dimethylallyl diphosphate</name>
        <dbReference type="ChEBI" id="CHEBI:57623"/>
    </ligand>
</feature>
<feature type="binding site" evidence="1">
    <location>
        <position position="233"/>
    </location>
    <ligand>
        <name>isopentenyl diphosphate</name>
        <dbReference type="ChEBI" id="CHEBI:128769"/>
    </ligand>
</feature>
<feature type="binding site" evidence="1">
    <location>
        <position position="234"/>
    </location>
    <ligand>
        <name>(2E)-4-hydroxy-3-methylbut-2-enyl diphosphate</name>
        <dbReference type="ChEBI" id="CHEBI:128753"/>
    </ligand>
</feature>
<feature type="binding site" evidence="1">
    <location>
        <position position="234"/>
    </location>
    <ligand>
        <name>dimethylallyl diphosphate</name>
        <dbReference type="ChEBI" id="CHEBI:57623"/>
    </ligand>
</feature>
<feature type="binding site" evidence="1">
    <location>
        <position position="234"/>
    </location>
    <ligand>
        <name>isopentenyl diphosphate</name>
        <dbReference type="ChEBI" id="CHEBI:128769"/>
    </ligand>
</feature>
<feature type="binding site" evidence="1">
    <location>
        <position position="235"/>
    </location>
    <ligand>
        <name>(2E)-4-hydroxy-3-methylbut-2-enyl diphosphate</name>
        <dbReference type="ChEBI" id="CHEBI:128753"/>
    </ligand>
</feature>
<feature type="binding site" evidence="1">
    <location>
        <position position="235"/>
    </location>
    <ligand>
        <name>dimethylallyl diphosphate</name>
        <dbReference type="ChEBI" id="CHEBI:57623"/>
    </ligand>
</feature>
<feature type="binding site" evidence="1">
    <location>
        <position position="235"/>
    </location>
    <ligand>
        <name>isopentenyl diphosphate</name>
        <dbReference type="ChEBI" id="CHEBI:128769"/>
    </ligand>
</feature>
<feature type="binding site" evidence="1">
    <location>
        <position position="278"/>
    </location>
    <ligand>
        <name>(2E)-4-hydroxy-3-methylbut-2-enyl diphosphate</name>
        <dbReference type="ChEBI" id="CHEBI:128753"/>
    </ligand>
</feature>
<feature type="binding site" evidence="1">
    <location>
        <position position="278"/>
    </location>
    <ligand>
        <name>dimethylallyl diphosphate</name>
        <dbReference type="ChEBI" id="CHEBI:57623"/>
    </ligand>
</feature>
<feature type="binding site" evidence="1">
    <location>
        <position position="278"/>
    </location>
    <ligand>
        <name>isopentenyl diphosphate</name>
        <dbReference type="ChEBI" id="CHEBI:128769"/>
    </ligand>
</feature>
<sequence length="346" mass="37738">MTQQRPPLEIRLCGPRGFCAGVDRAIQIVVLALKKYGAPVYVRHEIVHNRYVVEGLQARGAIFVEELDEIPAAHRNQPVVFSAHGVPKSVPADAEAKNLFYLDATCPLVSKVHKQAMRHQRLGRHVILIGHSGHPEVIGTMGQLPDGAVTLIETVEDAHTCHFDDEDNLGFVTQTTLSVDDTAGIIKELQARFPNLAAPAAESICYATTNRQDAVRAAAPGCDLFLIVGAPNSSNSKRLVEVAEKAGARMSMLVQRAEDIEWEQIGDISVVGLSAGASAPEIIVDEIIDAFKARFDVKIELAETTVETENFLVNREIRDVELTVKDMAFVNGEHRVVGISKLMQGK</sequence>
<gene>
    <name evidence="1" type="primary">ispH</name>
    <name type="synonym">lytB</name>
    <name type="ordered locus">BruAb1_0497</name>
</gene>
<name>ISPH_BRUAB</name>